<dbReference type="EC" id="6.3.4.20" evidence="1"/>
<dbReference type="EMBL" id="CP000680">
    <property type="protein sequence ID" value="ABP84046.1"/>
    <property type="molecule type" value="Genomic_DNA"/>
</dbReference>
<dbReference type="SMR" id="A4XRT0"/>
<dbReference type="STRING" id="399739.Pmen_1281"/>
<dbReference type="KEGG" id="pmy:Pmen_1281"/>
<dbReference type="PATRIC" id="fig|399739.8.peg.1296"/>
<dbReference type="eggNOG" id="COG0603">
    <property type="taxonomic scope" value="Bacteria"/>
</dbReference>
<dbReference type="HOGENOM" id="CLU_081854_1_1_6"/>
<dbReference type="OrthoDB" id="9789567at2"/>
<dbReference type="UniPathway" id="UPA00391"/>
<dbReference type="GO" id="GO:0005524">
    <property type="term" value="F:ATP binding"/>
    <property type="evidence" value="ECO:0007669"/>
    <property type="project" value="UniProtKB-UniRule"/>
</dbReference>
<dbReference type="GO" id="GO:0016879">
    <property type="term" value="F:ligase activity, forming carbon-nitrogen bonds"/>
    <property type="evidence" value="ECO:0007669"/>
    <property type="project" value="UniProtKB-UniRule"/>
</dbReference>
<dbReference type="GO" id="GO:0008270">
    <property type="term" value="F:zinc ion binding"/>
    <property type="evidence" value="ECO:0007669"/>
    <property type="project" value="UniProtKB-UniRule"/>
</dbReference>
<dbReference type="GO" id="GO:0008616">
    <property type="term" value="P:queuosine biosynthetic process"/>
    <property type="evidence" value="ECO:0007669"/>
    <property type="project" value="UniProtKB-UniRule"/>
</dbReference>
<dbReference type="CDD" id="cd01995">
    <property type="entry name" value="QueC-like"/>
    <property type="match status" value="1"/>
</dbReference>
<dbReference type="FunFam" id="3.40.50.620:FF:000131">
    <property type="entry name" value="7-cyano-7-deazaguanine synthase"/>
    <property type="match status" value="1"/>
</dbReference>
<dbReference type="Gene3D" id="3.40.50.620">
    <property type="entry name" value="HUPs"/>
    <property type="match status" value="1"/>
</dbReference>
<dbReference type="HAMAP" id="MF_01633">
    <property type="entry name" value="QueC"/>
    <property type="match status" value="1"/>
</dbReference>
<dbReference type="InterPro" id="IPR018317">
    <property type="entry name" value="QueC"/>
</dbReference>
<dbReference type="InterPro" id="IPR014729">
    <property type="entry name" value="Rossmann-like_a/b/a_fold"/>
</dbReference>
<dbReference type="NCBIfam" id="TIGR00364">
    <property type="entry name" value="7-cyano-7-deazaguanine synthase QueC"/>
    <property type="match status" value="1"/>
</dbReference>
<dbReference type="PANTHER" id="PTHR42914">
    <property type="entry name" value="7-CYANO-7-DEAZAGUANINE SYNTHASE"/>
    <property type="match status" value="1"/>
</dbReference>
<dbReference type="PANTHER" id="PTHR42914:SF1">
    <property type="entry name" value="7-CYANO-7-DEAZAGUANINE SYNTHASE"/>
    <property type="match status" value="1"/>
</dbReference>
<dbReference type="Pfam" id="PF06508">
    <property type="entry name" value="QueC"/>
    <property type="match status" value="1"/>
</dbReference>
<dbReference type="PIRSF" id="PIRSF006293">
    <property type="entry name" value="ExsB"/>
    <property type="match status" value="1"/>
</dbReference>
<dbReference type="SUPFAM" id="SSF52402">
    <property type="entry name" value="Adenine nucleotide alpha hydrolases-like"/>
    <property type="match status" value="1"/>
</dbReference>
<feature type="chain" id="PRO_0000336935" description="7-cyano-7-deazaguanine synthase">
    <location>
        <begin position="1"/>
        <end position="224"/>
    </location>
</feature>
<feature type="binding site" evidence="1">
    <location>
        <begin position="10"/>
        <end position="20"/>
    </location>
    <ligand>
        <name>ATP</name>
        <dbReference type="ChEBI" id="CHEBI:30616"/>
    </ligand>
</feature>
<feature type="binding site" evidence="1">
    <location>
        <position position="189"/>
    </location>
    <ligand>
        <name>Zn(2+)</name>
        <dbReference type="ChEBI" id="CHEBI:29105"/>
    </ligand>
</feature>
<feature type="binding site" evidence="1">
    <location>
        <position position="199"/>
    </location>
    <ligand>
        <name>Zn(2+)</name>
        <dbReference type="ChEBI" id="CHEBI:29105"/>
    </ligand>
</feature>
<feature type="binding site" evidence="1">
    <location>
        <position position="202"/>
    </location>
    <ligand>
        <name>Zn(2+)</name>
        <dbReference type="ChEBI" id="CHEBI:29105"/>
    </ligand>
</feature>
<feature type="binding site" evidence="1">
    <location>
        <position position="205"/>
    </location>
    <ligand>
        <name>Zn(2+)</name>
        <dbReference type="ChEBI" id="CHEBI:29105"/>
    </ligand>
</feature>
<accession>A4XRT0</accession>
<comment type="function">
    <text evidence="1">Catalyzes the ATP-dependent conversion of 7-carboxy-7-deazaguanine (CDG) to 7-cyano-7-deazaguanine (preQ(0)).</text>
</comment>
<comment type="catalytic activity">
    <reaction evidence="1">
        <text>7-carboxy-7-deazaguanine + NH4(+) + ATP = 7-cyano-7-deazaguanine + ADP + phosphate + H2O + H(+)</text>
        <dbReference type="Rhea" id="RHEA:27982"/>
        <dbReference type="ChEBI" id="CHEBI:15377"/>
        <dbReference type="ChEBI" id="CHEBI:15378"/>
        <dbReference type="ChEBI" id="CHEBI:28938"/>
        <dbReference type="ChEBI" id="CHEBI:30616"/>
        <dbReference type="ChEBI" id="CHEBI:43474"/>
        <dbReference type="ChEBI" id="CHEBI:45075"/>
        <dbReference type="ChEBI" id="CHEBI:61036"/>
        <dbReference type="ChEBI" id="CHEBI:456216"/>
        <dbReference type="EC" id="6.3.4.20"/>
    </reaction>
</comment>
<comment type="cofactor">
    <cofactor evidence="1">
        <name>Zn(2+)</name>
        <dbReference type="ChEBI" id="CHEBI:29105"/>
    </cofactor>
    <text evidence="1">Binds 1 zinc ion per subunit.</text>
</comment>
<comment type="pathway">
    <text evidence="1">Purine metabolism; 7-cyano-7-deazaguanine biosynthesis.</text>
</comment>
<comment type="similarity">
    <text evidence="1">Belongs to the QueC family.</text>
</comment>
<organism>
    <name type="scientific">Ectopseudomonas mendocina (strain ymp)</name>
    <name type="common">Pseudomonas mendocina</name>
    <dbReference type="NCBI Taxonomy" id="399739"/>
    <lineage>
        <taxon>Bacteria</taxon>
        <taxon>Pseudomonadati</taxon>
        <taxon>Pseudomonadota</taxon>
        <taxon>Gammaproteobacteria</taxon>
        <taxon>Pseudomonadales</taxon>
        <taxon>Pseudomonadaceae</taxon>
        <taxon>Ectopseudomonas</taxon>
    </lineage>
</organism>
<keyword id="KW-0067">ATP-binding</keyword>
<keyword id="KW-0436">Ligase</keyword>
<keyword id="KW-0479">Metal-binding</keyword>
<keyword id="KW-0547">Nucleotide-binding</keyword>
<keyword id="KW-0671">Queuosine biosynthesis</keyword>
<keyword id="KW-0862">Zinc</keyword>
<gene>
    <name evidence="1" type="primary">queC</name>
    <name type="ordered locus">Pmen_1281</name>
</gene>
<evidence type="ECO:0000255" key="1">
    <source>
        <dbReference type="HAMAP-Rule" id="MF_01633"/>
    </source>
</evidence>
<name>QUEC_ECTM1</name>
<sequence length="224" mass="23698">MSDKKAVILLSGGLDSATVVAMARAEGYACYSMSFDYGQRHRAELQAAERVARQLGVVEHKVVGLNLNGIGGSALTDSSIAVPETPGEGIPVTYVPARNTVFLSLALGWAEVLGARDIFIGVNAVDYSGYPDCRPEFVEAFERMANLATKAGVEGQGFAIRAPLQQMSKGEIIQAGMRLGVDYALTVSCYQADDDGRACGKCDSCRLRAAGFAAAGVPDATRYF</sequence>
<proteinExistence type="inferred from homology"/>
<reference key="1">
    <citation type="submission" date="2007-04" db="EMBL/GenBank/DDBJ databases">
        <title>Complete sequence of Pseudomonas mendocina ymp.</title>
        <authorList>
            <consortium name="US DOE Joint Genome Institute"/>
            <person name="Copeland A."/>
            <person name="Lucas S."/>
            <person name="Lapidus A."/>
            <person name="Barry K."/>
            <person name="Glavina del Rio T."/>
            <person name="Dalin E."/>
            <person name="Tice H."/>
            <person name="Pitluck S."/>
            <person name="Kiss H."/>
            <person name="Brettin T."/>
            <person name="Detter J.C."/>
            <person name="Bruce D."/>
            <person name="Han C."/>
            <person name="Schmutz J."/>
            <person name="Larimer F."/>
            <person name="Land M."/>
            <person name="Hauser L."/>
            <person name="Kyrpides N."/>
            <person name="Mikhailova N."/>
            <person name="Hersman L."/>
            <person name="Dubois J."/>
            <person name="Maurice P."/>
            <person name="Richardson P."/>
        </authorList>
    </citation>
    <scope>NUCLEOTIDE SEQUENCE [LARGE SCALE GENOMIC DNA]</scope>
    <source>
        <strain>ymp</strain>
    </source>
</reference>
<protein>
    <recommendedName>
        <fullName evidence="1">7-cyano-7-deazaguanine synthase</fullName>
        <ecNumber evidence="1">6.3.4.20</ecNumber>
    </recommendedName>
    <alternativeName>
        <fullName evidence="1">7-cyano-7-carbaguanine synthase</fullName>
    </alternativeName>
    <alternativeName>
        <fullName evidence="1">PreQ(0) synthase</fullName>
    </alternativeName>
    <alternativeName>
        <fullName evidence="1">Queuosine biosynthesis protein QueC</fullName>
    </alternativeName>
</protein>